<proteinExistence type="inferred from homology"/>
<dbReference type="EMBL" id="AE005174">
    <property type="protein sequence ID" value="AAG55452.1"/>
    <property type="status" value="ALT_INIT"/>
    <property type="molecule type" value="Genomic_DNA"/>
</dbReference>
<dbReference type="EMBL" id="BA000007">
    <property type="protein sequence ID" value="BAB34473.2"/>
    <property type="molecule type" value="Genomic_DNA"/>
</dbReference>
<dbReference type="PIR" id="B90760">
    <property type="entry name" value="B90760"/>
</dbReference>
<dbReference type="PIR" id="H85623">
    <property type="entry name" value="H85623"/>
</dbReference>
<dbReference type="RefSeq" id="NP_309077.2">
    <property type="nucleotide sequence ID" value="NC_002695.1"/>
</dbReference>
<dbReference type="RefSeq" id="WP_001295356.1">
    <property type="nucleotide sequence ID" value="NZ_VOAI01000006.1"/>
</dbReference>
<dbReference type="SMR" id="P0AB22"/>
<dbReference type="STRING" id="155864.Z1318"/>
<dbReference type="GeneID" id="916125"/>
<dbReference type="GeneID" id="93776448"/>
<dbReference type="KEGG" id="ece:Z1318"/>
<dbReference type="KEGG" id="ecs:ECs_1050"/>
<dbReference type="PATRIC" id="fig|386585.9.peg.1175"/>
<dbReference type="eggNOG" id="COG3785">
    <property type="taxonomic scope" value="Bacteria"/>
</dbReference>
<dbReference type="HOGENOM" id="CLU_123865_1_0_6"/>
<dbReference type="OMA" id="LRTAPWY"/>
<dbReference type="Proteomes" id="UP000000558">
    <property type="component" value="Chromosome"/>
</dbReference>
<dbReference type="Proteomes" id="UP000002519">
    <property type="component" value="Chromosome"/>
</dbReference>
<dbReference type="GO" id="GO:0005737">
    <property type="term" value="C:cytoplasm"/>
    <property type="evidence" value="ECO:0007669"/>
    <property type="project" value="UniProtKB-SubCell"/>
</dbReference>
<dbReference type="GO" id="GO:0003677">
    <property type="term" value="F:DNA binding"/>
    <property type="evidence" value="ECO:0007669"/>
    <property type="project" value="InterPro"/>
</dbReference>
<dbReference type="GO" id="GO:0009408">
    <property type="term" value="P:response to heat"/>
    <property type="evidence" value="ECO:0007669"/>
    <property type="project" value="UniProtKB-UniRule"/>
</dbReference>
<dbReference type="Gene3D" id="2.30.30.390">
    <property type="entry name" value="Hemimethylated DNA-binding domain"/>
    <property type="match status" value="1"/>
</dbReference>
<dbReference type="HAMAP" id="MF_01194">
    <property type="entry name" value="HspQ"/>
    <property type="match status" value="1"/>
</dbReference>
<dbReference type="InterPro" id="IPR011722">
    <property type="entry name" value="Hemimethylated_DNA-bd_dom"/>
</dbReference>
<dbReference type="InterPro" id="IPR036623">
    <property type="entry name" value="Hemimethylated_DNA-bd_sf"/>
</dbReference>
<dbReference type="InterPro" id="IPR022866">
    <property type="entry name" value="HspQ"/>
</dbReference>
<dbReference type="NCBIfam" id="NF010729">
    <property type="entry name" value="PRK14129.1"/>
    <property type="match status" value="1"/>
</dbReference>
<dbReference type="NCBIfam" id="TIGR02097">
    <property type="entry name" value="yccV"/>
    <property type="match status" value="1"/>
</dbReference>
<dbReference type="Pfam" id="PF08755">
    <property type="entry name" value="YccV-like"/>
    <property type="match status" value="1"/>
</dbReference>
<dbReference type="SMART" id="SM00992">
    <property type="entry name" value="YccV-like"/>
    <property type="match status" value="1"/>
</dbReference>
<dbReference type="SUPFAM" id="SSF141255">
    <property type="entry name" value="YccV-like"/>
    <property type="match status" value="1"/>
</dbReference>
<protein>
    <recommendedName>
        <fullName evidence="1">Heat shock protein HspQ</fullName>
    </recommendedName>
</protein>
<organism>
    <name type="scientific">Escherichia coli O157:H7</name>
    <dbReference type="NCBI Taxonomy" id="83334"/>
    <lineage>
        <taxon>Bacteria</taxon>
        <taxon>Pseudomonadati</taxon>
        <taxon>Pseudomonadota</taxon>
        <taxon>Gammaproteobacteria</taxon>
        <taxon>Enterobacterales</taxon>
        <taxon>Enterobacteriaceae</taxon>
        <taxon>Escherichia</taxon>
    </lineage>
</organism>
<keyword id="KW-0963">Cytoplasm</keyword>
<keyword id="KW-1185">Reference proteome</keyword>
<keyword id="KW-0346">Stress response</keyword>
<evidence type="ECO:0000255" key="1">
    <source>
        <dbReference type="HAMAP-Rule" id="MF_01194"/>
    </source>
</evidence>
<evidence type="ECO:0000256" key="2">
    <source>
        <dbReference type="SAM" id="MobiDB-lite"/>
    </source>
</evidence>
<evidence type="ECO:0000305" key="3"/>
<feature type="chain" id="PRO_0000168796" description="Heat shock protein HspQ">
    <location>
        <begin position="1"/>
        <end position="105"/>
    </location>
</feature>
<feature type="region of interest" description="Disordered" evidence="2">
    <location>
        <begin position="75"/>
        <end position="105"/>
    </location>
</feature>
<gene>
    <name evidence="1" type="primary">hspQ</name>
    <name type="ordered locus">Z1318</name>
    <name type="ordered locus">ECs1050</name>
</gene>
<reference key="1">
    <citation type="journal article" date="2001" name="Nature">
        <title>Genome sequence of enterohaemorrhagic Escherichia coli O157:H7.</title>
        <authorList>
            <person name="Perna N.T."/>
            <person name="Plunkett G. III"/>
            <person name="Burland V."/>
            <person name="Mau B."/>
            <person name="Glasner J.D."/>
            <person name="Rose D.J."/>
            <person name="Mayhew G.F."/>
            <person name="Evans P.S."/>
            <person name="Gregor J."/>
            <person name="Kirkpatrick H.A."/>
            <person name="Posfai G."/>
            <person name="Hackett J."/>
            <person name="Klink S."/>
            <person name="Boutin A."/>
            <person name="Shao Y."/>
            <person name="Miller L."/>
            <person name="Grotbeck E.J."/>
            <person name="Davis N.W."/>
            <person name="Lim A."/>
            <person name="Dimalanta E.T."/>
            <person name="Potamousis K."/>
            <person name="Apodaca J."/>
            <person name="Anantharaman T.S."/>
            <person name="Lin J."/>
            <person name="Yen G."/>
            <person name="Schwartz D.C."/>
            <person name="Welch R.A."/>
            <person name="Blattner F.R."/>
        </authorList>
    </citation>
    <scope>NUCLEOTIDE SEQUENCE [LARGE SCALE GENOMIC DNA]</scope>
    <source>
        <strain>O157:H7 / EDL933 / ATCC 700927 / EHEC</strain>
    </source>
</reference>
<reference key="2">
    <citation type="journal article" date="2001" name="DNA Res.">
        <title>Complete genome sequence of enterohemorrhagic Escherichia coli O157:H7 and genomic comparison with a laboratory strain K-12.</title>
        <authorList>
            <person name="Hayashi T."/>
            <person name="Makino K."/>
            <person name="Ohnishi M."/>
            <person name="Kurokawa K."/>
            <person name="Ishii K."/>
            <person name="Yokoyama K."/>
            <person name="Han C.-G."/>
            <person name="Ohtsubo E."/>
            <person name="Nakayama K."/>
            <person name="Murata T."/>
            <person name="Tanaka M."/>
            <person name="Tobe T."/>
            <person name="Iida T."/>
            <person name="Takami H."/>
            <person name="Honda T."/>
            <person name="Sasakawa C."/>
            <person name="Ogasawara N."/>
            <person name="Yasunaga T."/>
            <person name="Kuhara S."/>
            <person name="Shiba T."/>
            <person name="Hattori M."/>
            <person name="Shinagawa H."/>
        </authorList>
    </citation>
    <scope>NUCLEOTIDE SEQUENCE [LARGE SCALE GENOMIC DNA]</scope>
    <source>
        <strain>O157:H7 / Sakai / RIMD 0509952 / EHEC</strain>
    </source>
</reference>
<sequence>MIASKFGIGQQVRHSLLGYLGVVVDIDPVYSLSEPSPDELAVNDELRAAPWYHVVMEDDNGLPVHTYLAEAQLSSELQDEHPEQPSMDELAQTIRKQLQAPRLRN</sequence>
<accession>P0AB22</accession>
<accession>P75875</accession>
<name>HSPQ_ECO57</name>
<comment type="function">
    <text evidence="1">Involved in the degradation of certain denaturated proteins, including DnaA, during heat shock stress.</text>
</comment>
<comment type="subcellular location">
    <subcellularLocation>
        <location evidence="1">Cytoplasm</location>
    </subcellularLocation>
</comment>
<comment type="similarity">
    <text evidence="1">Belongs to the HspQ family.</text>
</comment>
<comment type="sequence caution" evidence="3">
    <conflict type="erroneous initiation">
        <sequence resource="EMBL-CDS" id="AAG55452"/>
    </conflict>
    <text>Extended N-terminus.</text>
</comment>